<sequence length="263" mass="29288">MNIYQTYEPSQIRELIRKKEITGPTAGLAEGYAQANLMIVKKELAFDFLLFCQRNPAACPLLDVLEPGDPVPRKSAPKADIRTDFPKYRIYRKGILQEEVSDISAYWEDDMVAFLIGCSFTFEHALMLNDIPVRHIENGHNVPMYQTNIACKRAGVFHGPMVVSMRPIPAHQITRSVQVTSRFPSVHGGPIHIGDPAMIGIANVDQPDFGETSVIKEGEVPVFWACGVTPQAVVMHTKPEIAITHAPGHMFITDQRDQQLGVL</sequence>
<organism>
    <name type="scientific">Bacillus pumilus (strain SAFR-032)</name>
    <dbReference type="NCBI Taxonomy" id="315750"/>
    <lineage>
        <taxon>Bacteria</taxon>
        <taxon>Bacillati</taxon>
        <taxon>Bacillota</taxon>
        <taxon>Bacilli</taxon>
        <taxon>Bacillales</taxon>
        <taxon>Bacillaceae</taxon>
        <taxon>Bacillus</taxon>
    </lineage>
</organism>
<gene>
    <name type="ordered locus">BPUM_0381</name>
</gene>
<feature type="chain" id="PRO_1000070409" description="Putative hydro-lyase BPUM_0381">
    <location>
        <begin position="1"/>
        <end position="263"/>
    </location>
</feature>
<accession>A8FA09</accession>
<comment type="similarity">
    <text evidence="1">Belongs to the D-glutamate cyclase family.</text>
</comment>
<proteinExistence type="inferred from homology"/>
<keyword id="KW-0456">Lyase</keyword>
<dbReference type="EC" id="4.2.1.-" evidence="1"/>
<dbReference type="EMBL" id="CP000813">
    <property type="protein sequence ID" value="ABV61076.1"/>
    <property type="molecule type" value="Genomic_DNA"/>
</dbReference>
<dbReference type="RefSeq" id="WP_012008944.1">
    <property type="nucleotide sequence ID" value="NC_009848.4"/>
</dbReference>
<dbReference type="SMR" id="A8FA09"/>
<dbReference type="STRING" id="315750.BPUM_0381"/>
<dbReference type="GeneID" id="5619633"/>
<dbReference type="KEGG" id="bpu:BPUM_0381"/>
<dbReference type="eggNOG" id="COG4336">
    <property type="taxonomic scope" value="Bacteria"/>
</dbReference>
<dbReference type="HOGENOM" id="CLU_059759_0_0_9"/>
<dbReference type="OrthoDB" id="149585at2"/>
<dbReference type="Proteomes" id="UP000001355">
    <property type="component" value="Chromosome"/>
</dbReference>
<dbReference type="GO" id="GO:0016829">
    <property type="term" value="F:lyase activity"/>
    <property type="evidence" value="ECO:0007669"/>
    <property type="project" value="UniProtKB-KW"/>
</dbReference>
<dbReference type="FunFam" id="3.30.2040.10:FF:000001">
    <property type="entry name" value="D-glutamate cyclase, mitochondrial"/>
    <property type="match status" value="1"/>
</dbReference>
<dbReference type="Gene3D" id="3.40.1640.10">
    <property type="entry name" value="PSTPO5379-like"/>
    <property type="match status" value="1"/>
</dbReference>
<dbReference type="Gene3D" id="3.30.2040.10">
    <property type="entry name" value="PSTPO5379-like domain"/>
    <property type="match status" value="1"/>
</dbReference>
<dbReference type="HAMAP" id="MF_01830">
    <property type="entry name" value="Hydro_lyase"/>
    <property type="match status" value="1"/>
</dbReference>
<dbReference type="InterPro" id="IPR009906">
    <property type="entry name" value="D-Glu_cyclase"/>
</dbReference>
<dbReference type="InterPro" id="IPR038021">
    <property type="entry name" value="Putative_hydro-lyase"/>
</dbReference>
<dbReference type="InterPro" id="IPR016938">
    <property type="entry name" value="UPF0317"/>
</dbReference>
<dbReference type="NCBIfam" id="NF003969">
    <property type="entry name" value="PRK05463.1"/>
    <property type="match status" value="1"/>
</dbReference>
<dbReference type="PANTHER" id="PTHR32022">
    <property type="entry name" value="D-GLUTAMATE CYCLASE, MITOCHONDRIAL"/>
    <property type="match status" value="1"/>
</dbReference>
<dbReference type="PANTHER" id="PTHR32022:SF10">
    <property type="entry name" value="D-GLUTAMATE CYCLASE, MITOCHONDRIAL"/>
    <property type="match status" value="1"/>
</dbReference>
<dbReference type="Pfam" id="PF07286">
    <property type="entry name" value="D-Glu_cyclase"/>
    <property type="match status" value="1"/>
</dbReference>
<dbReference type="PIRSF" id="PIRSF029755">
    <property type="entry name" value="UCP029755"/>
    <property type="match status" value="1"/>
</dbReference>
<dbReference type="SUPFAM" id="SSF160920">
    <property type="entry name" value="PSTPO5379-like"/>
    <property type="match status" value="1"/>
</dbReference>
<protein>
    <recommendedName>
        <fullName evidence="1">Putative hydro-lyase BPUM_0381</fullName>
        <ecNumber evidence="1">4.2.1.-</ecNumber>
    </recommendedName>
</protein>
<evidence type="ECO:0000255" key="1">
    <source>
        <dbReference type="HAMAP-Rule" id="MF_01830"/>
    </source>
</evidence>
<name>Y381_BACP2</name>
<reference key="1">
    <citation type="journal article" date="2007" name="PLoS ONE">
        <title>Paradoxical DNA repair and peroxide resistance gene conservation in Bacillus pumilus SAFR-032.</title>
        <authorList>
            <person name="Gioia J."/>
            <person name="Yerrapragada S."/>
            <person name="Qin X."/>
            <person name="Jiang H."/>
            <person name="Igboeli O.C."/>
            <person name="Muzny D."/>
            <person name="Dugan-Rocha S."/>
            <person name="Ding Y."/>
            <person name="Hawes A."/>
            <person name="Liu W."/>
            <person name="Perez L."/>
            <person name="Kovar C."/>
            <person name="Dinh H."/>
            <person name="Lee S."/>
            <person name="Nazareth L."/>
            <person name="Blyth P."/>
            <person name="Holder M."/>
            <person name="Buhay C."/>
            <person name="Tirumalai M.R."/>
            <person name="Liu Y."/>
            <person name="Dasgupta I."/>
            <person name="Bokhetache L."/>
            <person name="Fujita M."/>
            <person name="Karouia F."/>
            <person name="Eswara Moorthy P."/>
            <person name="Siefert J."/>
            <person name="Uzman A."/>
            <person name="Buzumbo P."/>
            <person name="Verma A."/>
            <person name="Zwiya H."/>
            <person name="McWilliams B.D."/>
            <person name="Olowu A."/>
            <person name="Clinkenbeard K.D."/>
            <person name="Newcombe D."/>
            <person name="Golebiewski L."/>
            <person name="Petrosino J.F."/>
            <person name="Nicholson W.L."/>
            <person name="Fox G.E."/>
            <person name="Venkateswaran K."/>
            <person name="Highlander S.K."/>
            <person name="Weinstock G.M."/>
        </authorList>
    </citation>
    <scope>NUCLEOTIDE SEQUENCE [LARGE SCALE GENOMIC DNA]</scope>
    <source>
        <strain>SAFR-032</strain>
    </source>
</reference>